<organism>
    <name type="scientific">Oryza sativa subsp. japonica</name>
    <name type="common">Rice</name>
    <dbReference type="NCBI Taxonomy" id="39947"/>
    <lineage>
        <taxon>Eukaryota</taxon>
        <taxon>Viridiplantae</taxon>
        <taxon>Streptophyta</taxon>
        <taxon>Embryophyta</taxon>
        <taxon>Tracheophyta</taxon>
        <taxon>Spermatophyta</taxon>
        <taxon>Magnoliopsida</taxon>
        <taxon>Liliopsida</taxon>
        <taxon>Poales</taxon>
        <taxon>Poaceae</taxon>
        <taxon>BOP clade</taxon>
        <taxon>Oryzoideae</taxon>
        <taxon>Oryzeae</taxon>
        <taxon>Oryzinae</taxon>
        <taxon>Oryza</taxon>
        <taxon>Oryza sativa</taxon>
    </lineage>
</organism>
<feature type="chain" id="PRO_0000441777" description="Ethylene-responsive transcription factor FZP">
    <location>
        <begin position="1"/>
        <end position="318"/>
    </location>
</feature>
<feature type="DNA-binding region" description="AP2/ERF" evidence="1">
    <location>
        <begin position="57"/>
        <end position="114"/>
    </location>
</feature>
<feature type="region of interest" description="Disordered" evidence="2">
    <location>
        <begin position="1"/>
        <end position="59"/>
    </location>
</feature>
<feature type="region of interest" description="Disordered" evidence="2">
    <location>
        <begin position="158"/>
        <end position="178"/>
    </location>
</feature>
<feature type="compositionally biased region" description="Low complexity" evidence="2">
    <location>
        <begin position="1"/>
        <end position="15"/>
    </location>
</feature>
<feature type="compositionally biased region" description="Pro residues" evidence="2">
    <location>
        <begin position="25"/>
        <end position="37"/>
    </location>
</feature>
<feature type="compositionally biased region" description="Basic residues" evidence="2">
    <location>
        <begin position="160"/>
        <end position="171"/>
    </location>
</feature>
<feature type="mutagenesis site" description="In fzp-2; absence of floret formation and replacement by excessive ramification of rachis-branches." evidence="4">
    <original>R</original>
    <variation>L</variation>
    <location>
        <position position="81"/>
    </location>
</feature>
<feature type="mutagenesis site" description="In fzp-3; absence of floret formation and replacement by excessive ramification of rachis-branches." evidence="4">
    <original>T</original>
    <variation>M</variation>
    <location>
        <position position="86"/>
    </location>
</feature>
<dbReference type="EMBL" id="AB103120">
    <property type="protein sequence ID" value="BAC79264.1"/>
    <property type="molecule type" value="Genomic_DNA"/>
</dbReference>
<dbReference type="EMBL" id="AP004570">
    <property type="protein sequence ID" value="BAC16657.1"/>
    <property type="molecule type" value="Genomic_DNA"/>
</dbReference>
<dbReference type="EMBL" id="AP008213">
    <property type="protein sequence ID" value="BAF22501.1"/>
    <property type="molecule type" value="Genomic_DNA"/>
</dbReference>
<dbReference type="EMBL" id="AP014963">
    <property type="protein sequence ID" value="BAT03139.1"/>
    <property type="molecule type" value="Genomic_DNA"/>
</dbReference>
<dbReference type="EMBL" id="CM000144">
    <property type="protein sequence ID" value="EAZ41029.1"/>
    <property type="status" value="ALT_INIT"/>
    <property type="molecule type" value="Genomic_DNA"/>
</dbReference>
<dbReference type="EMBL" id="AK105365">
    <property type="protein sequence ID" value="BAG97213.1"/>
    <property type="molecule type" value="mRNA"/>
</dbReference>
<dbReference type="EMBL" id="AY885985">
    <property type="protein sequence ID" value="AAX83542.1"/>
    <property type="molecule type" value="Genomic_DNA"/>
</dbReference>
<dbReference type="EMBL" id="AY885980">
    <property type="protein sequence ID" value="AAX83537.1"/>
    <property type="molecule type" value="Genomic_DNA"/>
</dbReference>
<dbReference type="EMBL" id="AY885981">
    <property type="protein sequence ID" value="AAX83538.1"/>
    <property type="molecule type" value="Genomic_DNA"/>
</dbReference>
<dbReference type="EMBL" id="AY885982">
    <property type="protein sequence ID" value="AAX83539.1"/>
    <property type="molecule type" value="Genomic_DNA"/>
</dbReference>
<dbReference type="EMBL" id="AY885983">
    <property type="protein sequence ID" value="AAX83540.1"/>
    <property type="molecule type" value="Genomic_DNA"/>
</dbReference>
<dbReference type="EMBL" id="AY885984">
    <property type="protein sequence ID" value="AAX83541.1"/>
    <property type="molecule type" value="Genomic_DNA"/>
</dbReference>
<dbReference type="SMR" id="Q8H3Q1"/>
<dbReference type="FunCoup" id="Q8H3Q1">
    <property type="interactions" value="24"/>
</dbReference>
<dbReference type="STRING" id="39947.Q8H3Q1"/>
<dbReference type="PaxDb" id="39947-Q8H3Q1"/>
<dbReference type="EnsemblPlants" id="Os07t0669500-01">
    <property type="protein sequence ID" value="Os07t0669500-01"/>
    <property type="gene ID" value="Os07g0669500"/>
</dbReference>
<dbReference type="Gramene" id="Os07t0669500-01">
    <property type="protein sequence ID" value="Os07t0669500-01"/>
    <property type="gene ID" value="Os07g0669500"/>
</dbReference>
<dbReference type="KEGG" id="dosa:Os07g0669500"/>
<dbReference type="eggNOG" id="ENOG502QQPC">
    <property type="taxonomic scope" value="Eukaryota"/>
</dbReference>
<dbReference type="HOGENOM" id="CLU_078905_0_0_1"/>
<dbReference type="InParanoid" id="Q8H3Q1"/>
<dbReference type="OMA" id="HHEFLFA"/>
<dbReference type="OrthoDB" id="1937505at2759"/>
<dbReference type="Proteomes" id="UP000000763">
    <property type="component" value="Chromosome 7"/>
</dbReference>
<dbReference type="Proteomes" id="UP000007752">
    <property type="component" value="Chromosome 7"/>
</dbReference>
<dbReference type="Proteomes" id="UP000059680">
    <property type="component" value="Chromosome 7"/>
</dbReference>
<dbReference type="GO" id="GO:0005634">
    <property type="term" value="C:nucleus"/>
    <property type="evidence" value="ECO:0007669"/>
    <property type="project" value="UniProtKB-SubCell"/>
</dbReference>
<dbReference type="GO" id="GO:0003677">
    <property type="term" value="F:DNA binding"/>
    <property type="evidence" value="ECO:0007669"/>
    <property type="project" value="UniProtKB-KW"/>
</dbReference>
<dbReference type="GO" id="GO:0003700">
    <property type="term" value="F:DNA-binding transcription factor activity"/>
    <property type="evidence" value="ECO:0007669"/>
    <property type="project" value="InterPro"/>
</dbReference>
<dbReference type="GO" id="GO:0010582">
    <property type="term" value="P:floral meristem determinacy"/>
    <property type="evidence" value="ECO:0000315"/>
    <property type="project" value="UniProtKB"/>
</dbReference>
<dbReference type="GO" id="GO:0045893">
    <property type="term" value="P:positive regulation of DNA-templated transcription"/>
    <property type="evidence" value="ECO:0000314"/>
    <property type="project" value="UniProtKB"/>
</dbReference>
<dbReference type="GO" id="GO:2000032">
    <property type="term" value="P:regulation of secondary shoot formation"/>
    <property type="evidence" value="ECO:0000315"/>
    <property type="project" value="UniProtKB"/>
</dbReference>
<dbReference type="CDD" id="cd00018">
    <property type="entry name" value="AP2"/>
    <property type="match status" value="1"/>
</dbReference>
<dbReference type="FunFam" id="3.30.730.10:FF:000001">
    <property type="entry name" value="Ethylene-responsive transcription factor 2"/>
    <property type="match status" value="1"/>
</dbReference>
<dbReference type="Gene3D" id="3.30.730.10">
    <property type="entry name" value="AP2/ERF domain"/>
    <property type="match status" value="1"/>
</dbReference>
<dbReference type="InterPro" id="IPR001471">
    <property type="entry name" value="AP2/ERF_dom"/>
</dbReference>
<dbReference type="InterPro" id="IPR036955">
    <property type="entry name" value="AP2/ERF_dom_sf"/>
</dbReference>
<dbReference type="InterPro" id="IPR016177">
    <property type="entry name" value="DNA-bd_dom_sf"/>
</dbReference>
<dbReference type="PANTHER" id="PTHR31677">
    <property type="entry name" value="AP2 DOMAIN CLASS TRANSCRIPTION FACTOR"/>
    <property type="match status" value="1"/>
</dbReference>
<dbReference type="PANTHER" id="PTHR31677:SF49">
    <property type="entry name" value="ETHYLENE-RESPONSIVE TRANSCRIPTION FACTOR ERF086"/>
    <property type="match status" value="1"/>
</dbReference>
<dbReference type="Pfam" id="PF00847">
    <property type="entry name" value="AP2"/>
    <property type="match status" value="1"/>
</dbReference>
<dbReference type="PRINTS" id="PR00367">
    <property type="entry name" value="ETHRSPELEMNT"/>
</dbReference>
<dbReference type="SMART" id="SM00380">
    <property type="entry name" value="AP2"/>
    <property type="match status" value="1"/>
</dbReference>
<dbReference type="SUPFAM" id="SSF54171">
    <property type="entry name" value="DNA-binding domain"/>
    <property type="match status" value="1"/>
</dbReference>
<dbReference type="PROSITE" id="PS51032">
    <property type="entry name" value="AP2_ERF"/>
    <property type="match status" value="1"/>
</dbReference>
<keyword id="KW-0217">Developmental protein</keyword>
<keyword id="KW-0238">DNA-binding</keyword>
<keyword id="KW-0539">Nucleus</keyword>
<keyword id="KW-1185">Reference proteome</keyword>
<keyword id="KW-0804">Transcription</keyword>
<keyword id="KW-0805">Transcription regulation</keyword>
<proteinExistence type="evidence at protein level"/>
<protein>
    <recommendedName>
        <fullName evidence="11">Ethylene-responsive transcription factor FZP</fullName>
    </recommendedName>
    <alternativeName>
        <fullName evidence="10">OsERF078</fullName>
    </alternativeName>
    <alternativeName>
        <fullName evidence="9">Protein BRANCHED FLORETLESS 1</fullName>
    </alternativeName>
    <alternativeName>
        <fullName evidence="8">Protein FRIZZY PANICLE</fullName>
    </alternativeName>
    <alternativeName>
        <fullName evidence="7">Protein FRIZZY PANICLE 2</fullName>
    </alternativeName>
</protein>
<evidence type="ECO:0000255" key="1">
    <source>
        <dbReference type="PROSITE-ProRule" id="PRU00366"/>
    </source>
</evidence>
<evidence type="ECO:0000256" key="2">
    <source>
        <dbReference type="SAM" id="MobiDB-lite"/>
    </source>
</evidence>
<evidence type="ECO:0000269" key="3">
    <source>
    </source>
</evidence>
<evidence type="ECO:0000269" key="4">
    <source>
    </source>
</evidence>
<evidence type="ECO:0000269" key="5">
    <source>
    </source>
</evidence>
<evidence type="ECO:0000269" key="6">
    <source>
    </source>
</evidence>
<evidence type="ECO:0000303" key="7">
    <source>
    </source>
</evidence>
<evidence type="ECO:0000303" key="8">
    <source>
    </source>
</evidence>
<evidence type="ECO:0000303" key="9">
    <source>
    </source>
</evidence>
<evidence type="ECO:0000303" key="10">
    <source>
    </source>
</evidence>
<evidence type="ECO:0000305" key="11"/>
<evidence type="ECO:0000312" key="12">
    <source>
        <dbReference type="EMBL" id="BAC16657.1"/>
    </source>
</evidence>
<evidence type="ECO:0000312" key="13">
    <source>
        <dbReference type="EMBL" id="BAF22501.1"/>
    </source>
</evidence>
<evidence type="ECO:0000312" key="14">
    <source>
        <dbReference type="EMBL" id="EAZ41029.1"/>
    </source>
</evidence>
<comment type="function">
    <text evidence="4 5 6">Required to prevent the formation of axillary meristems within the spikelet meristem and permit the subsequent establishment of floral meristem identity (PubMed:12835399, PubMed:14503923). Mediates the transition from spikelet to floret meristem (PubMed:14503923). Determines the transition from panicle branching to spikelet formation. May specify floral organ identity by regulating the class B genes (Agamous-like genes) MADS6 and MADS17, as well as class E genes MADS1, MADS7 and MADS8 in floral meristem (PubMed:26744119). Possesses transactivation activity (PubMed:12835399).</text>
</comment>
<comment type="subcellular location">
    <subcellularLocation>
        <location evidence="1">Nucleus</location>
    </subcellularLocation>
</comment>
<comment type="developmental stage">
    <text>Expressed at the time of rudimentary glumes differentiation in a half-ring domain at the base of the rudimentary glume primordium.</text>
</comment>
<comment type="disruption phenotype">
    <text evidence="3">Altered specification of terminal and lateral spikelet meristems, resulting in the generation of a panicle composed of excessive ramification of rachis-branches.</text>
</comment>
<comment type="similarity">
    <text evidence="11">Belongs to the AP2/ERF transcription factor family. ERF subfamily.</text>
</comment>
<comment type="sequence caution" evidence="11">
    <conflict type="erroneous initiation">
        <sequence resource="EMBL-CDS" id="EAZ41029"/>
    </conflict>
    <text>Truncated N-terminus.</text>
</comment>
<sequence>MNTRGSGSSSSSSSSQASLMAFSEPPKPASQPSPPSSPMSERPPSGRSRRRAQEPGRFLGVRRRPWGRYAAEIRDPTTKERHWLGTFDTAQEAALAYDRAALSMKGAQARTNFVYTHAAYNYPPFLAPFHAPQYAAAAAAPSSVQYGGGVGAAPHIGSYGHHHHHHHHHGHGAASGASSVGECSTMPVMVPVDPHRSSMSSSLLDMDRNGHDFLFSGADDNSGYLSSVVPESCLRPRGGGAAADHQDMRRYSDADAYGMMGLREDVDDLAQMVAGFWGGGDAADQLGACGFPASGGAADMVASSQGSDSYSPFSFLSH</sequence>
<gene>
    <name evidence="8" type="primary">FZP</name>
    <name evidence="9" type="synonym">BFL1</name>
    <name evidence="11" type="synonym">ERF78</name>
    <name evidence="7" type="synonym">FZP2</name>
    <name evidence="13" type="ordered locus">Os07g0669500</name>
    <name evidence="11" type="ordered locus">LOC_Os07g47330</name>
    <name evidence="14" type="ORF">OsJ_25514</name>
    <name evidence="12" type="ORF">P0625E02.126</name>
</gene>
<name>FZP_ORYSJ</name>
<reference key="1">
    <citation type="journal article" date="2003" name="Development">
        <title>FRIZZY PANICLE is required to prevent the formation of axillary meristems and to establish floral meristem identity in rice spikelets.</title>
        <authorList>
            <person name="Komatsu M."/>
            <person name="Chujo A."/>
            <person name="Nagato Y."/>
            <person name="Shimamoto K."/>
            <person name="Kyozuka J."/>
        </authorList>
    </citation>
    <scope>NUCLEOTIDE SEQUENCE [GENOMIC DNA]</scope>
    <scope>FUNCTION</scope>
    <scope>DEVELOPMENTAL STAGE</scope>
    <scope>MUTAGENESIS OF ARG-81 AND THR-86</scope>
</reference>
<reference key="2">
    <citation type="journal article" date="2005" name="Nature">
        <title>The map-based sequence of the rice genome.</title>
        <authorList>
            <consortium name="International rice genome sequencing project (IRGSP)"/>
        </authorList>
    </citation>
    <scope>NUCLEOTIDE SEQUENCE [LARGE SCALE GENOMIC DNA]</scope>
    <source>
        <strain>cv. Nipponbare</strain>
    </source>
</reference>
<reference key="3">
    <citation type="journal article" date="2008" name="Nucleic Acids Res.">
        <title>The rice annotation project database (RAP-DB): 2008 update.</title>
        <authorList>
            <consortium name="The rice annotation project (RAP)"/>
        </authorList>
    </citation>
    <scope>GENOME REANNOTATION</scope>
    <source>
        <strain>cv. Nipponbare</strain>
    </source>
</reference>
<reference key="4">
    <citation type="journal article" date="2013" name="Rice">
        <title>Improvement of the Oryza sativa Nipponbare reference genome using next generation sequence and optical map data.</title>
        <authorList>
            <person name="Kawahara Y."/>
            <person name="de la Bastide M."/>
            <person name="Hamilton J.P."/>
            <person name="Kanamori H."/>
            <person name="McCombie W.R."/>
            <person name="Ouyang S."/>
            <person name="Schwartz D.C."/>
            <person name="Tanaka T."/>
            <person name="Wu J."/>
            <person name="Zhou S."/>
            <person name="Childs K.L."/>
            <person name="Davidson R.M."/>
            <person name="Lin H."/>
            <person name="Quesada-Ocampo L."/>
            <person name="Vaillancourt B."/>
            <person name="Sakai H."/>
            <person name="Lee S.S."/>
            <person name="Kim J."/>
            <person name="Numa H."/>
            <person name="Itoh T."/>
            <person name="Buell C.R."/>
            <person name="Matsumoto T."/>
        </authorList>
    </citation>
    <scope>GENOME REANNOTATION</scope>
    <source>
        <strain>cv. Nipponbare</strain>
    </source>
</reference>
<reference key="5">
    <citation type="journal article" date="2005" name="PLoS Biol.">
        <title>The genomes of Oryza sativa: a history of duplications.</title>
        <authorList>
            <person name="Yu J."/>
            <person name="Wang J."/>
            <person name="Lin W."/>
            <person name="Li S."/>
            <person name="Li H."/>
            <person name="Zhou J."/>
            <person name="Ni P."/>
            <person name="Dong W."/>
            <person name="Hu S."/>
            <person name="Zeng C."/>
            <person name="Zhang J."/>
            <person name="Zhang Y."/>
            <person name="Li R."/>
            <person name="Xu Z."/>
            <person name="Li S."/>
            <person name="Li X."/>
            <person name="Zheng H."/>
            <person name="Cong L."/>
            <person name="Lin L."/>
            <person name="Yin J."/>
            <person name="Geng J."/>
            <person name="Li G."/>
            <person name="Shi J."/>
            <person name="Liu J."/>
            <person name="Lv H."/>
            <person name="Li J."/>
            <person name="Wang J."/>
            <person name="Deng Y."/>
            <person name="Ran L."/>
            <person name="Shi X."/>
            <person name="Wang X."/>
            <person name="Wu Q."/>
            <person name="Li C."/>
            <person name="Ren X."/>
            <person name="Wang J."/>
            <person name="Wang X."/>
            <person name="Li D."/>
            <person name="Liu D."/>
            <person name="Zhang X."/>
            <person name="Ji Z."/>
            <person name="Zhao W."/>
            <person name="Sun Y."/>
            <person name="Zhang Z."/>
            <person name="Bao J."/>
            <person name="Han Y."/>
            <person name="Dong L."/>
            <person name="Ji J."/>
            <person name="Chen P."/>
            <person name="Wu S."/>
            <person name="Liu J."/>
            <person name="Xiao Y."/>
            <person name="Bu D."/>
            <person name="Tan J."/>
            <person name="Yang L."/>
            <person name="Ye C."/>
            <person name="Zhang J."/>
            <person name="Xu J."/>
            <person name="Zhou Y."/>
            <person name="Yu Y."/>
            <person name="Zhang B."/>
            <person name="Zhuang S."/>
            <person name="Wei H."/>
            <person name="Liu B."/>
            <person name="Lei M."/>
            <person name="Yu H."/>
            <person name="Li Y."/>
            <person name="Xu H."/>
            <person name="Wei S."/>
            <person name="He X."/>
            <person name="Fang L."/>
            <person name="Zhang Z."/>
            <person name="Zhang Y."/>
            <person name="Huang X."/>
            <person name="Su Z."/>
            <person name="Tong W."/>
            <person name="Li J."/>
            <person name="Tong Z."/>
            <person name="Li S."/>
            <person name="Ye J."/>
            <person name="Wang L."/>
            <person name="Fang L."/>
            <person name="Lei T."/>
            <person name="Chen C.-S."/>
            <person name="Chen H.-C."/>
            <person name="Xu Z."/>
            <person name="Li H."/>
            <person name="Huang H."/>
            <person name="Zhang F."/>
            <person name="Xu H."/>
            <person name="Li N."/>
            <person name="Zhao C."/>
            <person name="Li S."/>
            <person name="Dong L."/>
            <person name="Huang Y."/>
            <person name="Li L."/>
            <person name="Xi Y."/>
            <person name="Qi Q."/>
            <person name="Li W."/>
            <person name="Zhang B."/>
            <person name="Hu W."/>
            <person name="Zhang Y."/>
            <person name="Tian X."/>
            <person name="Jiao Y."/>
            <person name="Liang X."/>
            <person name="Jin J."/>
            <person name="Gao L."/>
            <person name="Zheng W."/>
            <person name="Hao B."/>
            <person name="Liu S.-M."/>
            <person name="Wang W."/>
            <person name="Yuan L."/>
            <person name="Cao M."/>
            <person name="McDermott J."/>
            <person name="Samudrala R."/>
            <person name="Wang J."/>
            <person name="Wong G.K.-S."/>
            <person name="Yang H."/>
        </authorList>
    </citation>
    <scope>NUCLEOTIDE SEQUENCE [LARGE SCALE GENOMIC DNA]</scope>
    <source>
        <strain>cv. Nipponbare</strain>
    </source>
</reference>
<reference key="6">
    <citation type="journal article" date="2003" name="Science">
        <title>Collection, mapping, and annotation of over 28,000 cDNA clones from japonica rice.</title>
        <authorList>
            <consortium name="The rice full-length cDNA consortium"/>
        </authorList>
    </citation>
    <scope>NUCLEOTIDE SEQUENCE [LARGE SCALE MRNA]</scope>
    <source>
        <strain>cv. Nipponbare</strain>
    </source>
</reference>
<reference key="7">
    <citation type="submission" date="2005-01" db="EMBL/GenBank/DDBJ databases">
        <title>A hypothesis on the genetic cost of domestication: Inference from rice genomic sequences.</title>
        <authorList>
            <person name="Wu C.-I."/>
            <person name="Lu J."/>
            <person name="Tang T."/>
            <person name="Tang H."/>
            <person name="Huang J."/>
            <person name="Wang J."/>
            <person name="Yu J."/>
            <person name="Shi S."/>
        </authorList>
    </citation>
    <scope>NUCLEOTIDE SEQUENCE [GENOMIC DNA] OF 31-309</scope>
</reference>
<reference key="8">
    <citation type="journal article" date="2001" name="Dev. Biol.">
        <title>The LAX1 and FRIZZY PANICLE 2 genes determine the inflorescence architecture of rice by controlling rachis-branch and spikelet development.</title>
        <authorList>
            <person name="Komatsu M."/>
            <person name="Maekawa M."/>
            <person name="Shimamoto K."/>
            <person name="Kyozuka J."/>
        </authorList>
    </citation>
    <scope>IDENTIFICATION OF FRIZZY PANICLE DISRUPTION PHENOTYPE</scope>
</reference>
<reference key="9">
    <citation type="journal article" date="2003" name="BMC Plant Biol.">
        <title>Ds tagging of BRANCHED FLORETLESS 1 (BFL1) that mediates the transition from spikelet to floret meristem in rice (Oryza sativa L).</title>
        <authorList>
            <person name="Zhu Q.H."/>
            <person name="Hoque M.S."/>
            <person name="Dennis E.S."/>
            <person name="Upadhyaya N.M."/>
        </authorList>
    </citation>
    <scope>FUNCTION</scope>
    <scope>DISRUPTION PHENOTYPE</scope>
</reference>
<reference key="10">
    <citation type="journal article" date="2006" name="Plant Physiol.">
        <title>Genome-wide analysis of the ERF gene family in Arabidopsis and rice.</title>
        <authorList>
            <person name="Nakano T."/>
            <person name="Suzuki K."/>
            <person name="Fujimura T."/>
            <person name="Shinshi H."/>
        </authorList>
    </citation>
    <scope>GENE FAMILY</scope>
    <scope>NOMENCLATURE</scope>
</reference>
<reference key="11">
    <citation type="journal article" date="2016" name="Sci. Rep.">
        <title>Regulatory role of FZP in the determination of panicle branching and spikelet formation in rice.</title>
        <authorList>
            <person name="Bai X."/>
            <person name="Huang Y."/>
            <person name="Mao D."/>
            <person name="Wen M."/>
            <person name="Zhang L."/>
            <person name="Xing Y."/>
        </authorList>
    </citation>
    <scope>FUNCTION</scope>
</reference>
<accession>Q8H3Q1</accession>
<accession>A1KZD0</accession>
<accession>A3BN90</accession>